<dbReference type="EC" id="5.6.1.7" evidence="1"/>
<dbReference type="EMBL" id="CP000544">
    <property type="protein sequence ID" value="ABM63104.1"/>
    <property type="molecule type" value="Genomic_DNA"/>
</dbReference>
<dbReference type="RefSeq" id="WP_011815126.1">
    <property type="nucleotide sequence ID" value="NC_008789.1"/>
</dbReference>
<dbReference type="SMR" id="A1WZJ2"/>
<dbReference type="STRING" id="349124.Hhal_2341"/>
<dbReference type="KEGG" id="hha:Hhal_2341"/>
<dbReference type="eggNOG" id="COG0459">
    <property type="taxonomic scope" value="Bacteria"/>
</dbReference>
<dbReference type="HOGENOM" id="CLU_016503_3_0_6"/>
<dbReference type="OrthoDB" id="9766614at2"/>
<dbReference type="Proteomes" id="UP000000647">
    <property type="component" value="Chromosome"/>
</dbReference>
<dbReference type="GO" id="GO:0005737">
    <property type="term" value="C:cytoplasm"/>
    <property type="evidence" value="ECO:0007669"/>
    <property type="project" value="UniProtKB-SubCell"/>
</dbReference>
<dbReference type="GO" id="GO:0005524">
    <property type="term" value="F:ATP binding"/>
    <property type="evidence" value="ECO:0007669"/>
    <property type="project" value="UniProtKB-UniRule"/>
</dbReference>
<dbReference type="GO" id="GO:0140662">
    <property type="term" value="F:ATP-dependent protein folding chaperone"/>
    <property type="evidence" value="ECO:0007669"/>
    <property type="project" value="InterPro"/>
</dbReference>
<dbReference type="GO" id="GO:0016853">
    <property type="term" value="F:isomerase activity"/>
    <property type="evidence" value="ECO:0007669"/>
    <property type="project" value="UniProtKB-KW"/>
</dbReference>
<dbReference type="GO" id="GO:0051082">
    <property type="term" value="F:unfolded protein binding"/>
    <property type="evidence" value="ECO:0007669"/>
    <property type="project" value="UniProtKB-UniRule"/>
</dbReference>
<dbReference type="GO" id="GO:0042026">
    <property type="term" value="P:protein refolding"/>
    <property type="evidence" value="ECO:0007669"/>
    <property type="project" value="UniProtKB-UniRule"/>
</dbReference>
<dbReference type="CDD" id="cd03344">
    <property type="entry name" value="GroEL"/>
    <property type="match status" value="1"/>
</dbReference>
<dbReference type="FunFam" id="3.50.7.10:FF:000001">
    <property type="entry name" value="60 kDa chaperonin"/>
    <property type="match status" value="1"/>
</dbReference>
<dbReference type="Gene3D" id="3.50.7.10">
    <property type="entry name" value="GroEL"/>
    <property type="match status" value="1"/>
</dbReference>
<dbReference type="Gene3D" id="1.10.560.10">
    <property type="entry name" value="GroEL-like equatorial domain"/>
    <property type="match status" value="1"/>
</dbReference>
<dbReference type="Gene3D" id="3.30.260.10">
    <property type="entry name" value="TCP-1-like chaperonin intermediate domain"/>
    <property type="match status" value="1"/>
</dbReference>
<dbReference type="HAMAP" id="MF_00600">
    <property type="entry name" value="CH60"/>
    <property type="match status" value="1"/>
</dbReference>
<dbReference type="InterPro" id="IPR018370">
    <property type="entry name" value="Chaperonin_Cpn60_CS"/>
</dbReference>
<dbReference type="InterPro" id="IPR001844">
    <property type="entry name" value="Cpn60/GroEL"/>
</dbReference>
<dbReference type="InterPro" id="IPR002423">
    <property type="entry name" value="Cpn60/GroEL/TCP-1"/>
</dbReference>
<dbReference type="InterPro" id="IPR027409">
    <property type="entry name" value="GroEL-like_apical_dom_sf"/>
</dbReference>
<dbReference type="InterPro" id="IPR027413">
    <property type="entry name" value="GROEL-like_equatorial_sf"/>
</dbReference>
<dbReference type="InterPro" id="IPR027410">
    <property type="entry name" value="TCP-1-like_intermed_sf"/>
</dbReference>
<dbReference type="NCBIfam" id="TIGR02348">
    <property type="entry name" value="GroEL"/>
    <property type="match status" value="1"/>
</dbReference>
<dbReference type="NCBIfam" id="NF000592">
    <property type="entry name" value="PRK00013.1"/>
    <property type="match status" value="1"/>
</dbReference>
<dbReference type="NCBIfam" id="NF009487">
    <property type="entry name" value="PRK12849.1"/>
    <property type="match status" value="1"/>
</dbReference>
<dbReference type="NCBIfam" id="NF009488">
    <property type="entry name" value="PRK12850.1"/>
    <property type="match status" value="1"/>
</dbReference>
<dbReference type="NCBIfam" id="NF009489">
    <property type="entry name" value="PRK12851.1"/>
    <property type="match status" value="1"/>
</dbReference>
<dbReference type="PANTHER" id="PTHR45633">
    <property type="entry name" value="60 KDA HEAT SHOCK PROTEIN, MITOCHONDRIAL"/>
    <property type="match status" value="1"/>
</dbReference>
<dbReference type="Pfam" id="PF00118">
    <property type="entry name" value="Cpn60_TCP1"/>
    <property type="match status" value="1"/>
</dbReference>
<dbReference type="PRINTS" id="PR00298">
    <property type="entry name" value="CHAPERONIN60"/>
</dbReference>
<dbReference type="SUPFAM" id="SSF52029">
    <property type="entry name" value="GroEL apical domain-like"/>
    <property type="match status" value="1"/>
</dbReference>
<dbReference type="SUPFAM" id="SSF48592">
    <property type="entry name" value="GroEL equatorial domain-like"/>
    <property type="match status" value="1"/>
</dbReference>
<dbReference type="SUPFAM" id="SSF54849">
    <property type="entry name" value="GroEL-intermediate domain like"/>
    <property type="match status" value="1"/>
</dbReference>
<dbReference type="PROSITE" id="PS00296">
    <property type="entry name" value="CHAPERONINS_CPN60"/>
    <property type="match status" value="1"/>
</dbReference>
<feature type="chain" id="PRO_1000025791" description="Chaperonin GroEL">
    <location>
        <begin position="1"/>
        <end position="550"/>
    </location>
</feature>
<feature type="region of interest" description="Disordered" evidence="2">
    <location>
        <begin position="525"/>
        <end position="550"/>
    </location>
</feature>
<feature type="compositionally biased region" description="Gly residues" evidence="2">
    <location>
        <begin position="534"/>
        <end position="550"/>
    </location>
</feature>
<feature type="binding site" evidence="1">
    <location>
        <begin position="30"/>
        <end position="33"/>
    </location>
    <ligand>
        <name>ATP</name>
        <dbReference type="ChEBI" id="CHEBI:30616"/>
    </ligand>
</feature>
<feature type="binding site" evidence="1">
    <location>
        <position position="51"/>
    </location>
    <ligand>
        <name>ATP</name>
        <dbReference type="ChEBI" id="CHEBI:30616"/>
    </ligand>
</feature>
<feature type="binding site" evidence="1">
    <location>
        <begin position="87"/>
        <end position="91"/>
    </location>
    <ligand>
        <name>ATP</name>
        <dbReference type="ChEBI" id="CHEBI:30616"/>
    </ligand>
</feature>
<feature type="binding site" evidence="1">
    <location>
        <position position="416"/>
    </location>
    <ligand>
        <name>ATP</name>
        <dbReference type="ChEBI" id="CHEBI:30616"/>
    </ligand>
</feature>
<feature type="binding site" evidence="1">
    <location>
        <begin position="480"/>
        <end position="482"/>
    </location>
    <ligand>
        <name>ATP</name>
        <dbReference type="ChEBI" id="CHEBI:30616"/>
    </ligand>
</feature>
<feature type="binding site" evidence="1">
    <location>
        <position position="496"/>
    </location>
    <ligand>
        <name>ATP</name>
        <dbReference type="ChEBI" id="CHEBI:30616"/>
    </ligand>
</feature>
<sequence>MAAKEIRFSDDARQRMMSGVNQLANAVKVTLGPRGRNAVLEKSFGAPTVTKDGVSVAKEIELEDHFENMGAQMLKEVSSQTSDVAGDGTTTATVLAQAILREGMKSLAAGMSPMELKKGIEKATEAASNYLSDELSKPCEDDNSIAQVGTISANSDEAVGRIIADAMGKVGKEGVITVEEGSGLDNELDVVEGMQFDRGYLSPYFVTDQQTMKAELEDAAILLHDKKISNIRDLLPLLEGVAKQNRPLLIIAEEVEGEALATLVVNNLRGIVKVAAVKAPGFGDRRKAMLQDIAILTGGTVISDEVGMTLENATVDDLGTAKKVQISKEETTIVGGAGRHDDIMARVEQIRAQMEESTSDYDKEKLQERVAKLVGGVAVIKVGAATEVEMKEKKARVEDALHATRAAVEEGIVPGGGTALIRALAALEGLSGANEEQTQGIALVRRAMEEPLRQLVLNAGEDASVVVNKVREGTGNHGYNVATGEYGDLVQAGVLDPTKVTRSALQNAASVAALMLTTEAMVADLPKKDDEGGGGDMGGMGGMGGMGGMM</sequence>
<keyword id="KW-0067">ATP-binding</keyword>
<keyword id="KW-0143">Chaperone</keyword>
<keyword id="KW-0963">Cytoplasm</keyword>
<keyword id="KW-0413">Isomerase</keyword>
<keyword id="KW-0547">Nucleotide-binding</keyword>
<keyword id="KW-1185">Reference proteome</keyword>
<protein>
    <recommendedName>
        <fullName evidence="1">Chaperonin GroEL</fullName>
        <ecNumber evidence="1">5.6.1.7</ecNumber>
    </recommendedName>
    <alternativeName>
        <fullName evidence="1">60 kDa chaperonin</fullName>
    </alternativeName>
    <alternativeName>
        <fullName evidence="1">Chaperonin-60</fullName>
        <shortName evidence="1">Cpn60</shortName>
    </alternativeName>
</protein>
<proteinExistence type="inferred from homology"/>
<gene>
    <name evidence="1" type="primary">groEL</name>
    <name evidence="1" type="synonym">groL</name>
    <name type="ordered locus">Hhal_2341</name>
</gene>
<evidence type="ECO:0000255" key="1">
    <source>
        <dbReference type="HAMAP-Rule" id="MF_00600"/>
    </source>
</evidence>
<evidence type="ECO:0000256" key="2">
    <source>
        <dbReference type="SAM" id="MobiDB-lite"/>
    </source>
</evidence>
<accession>A1WZJ2</accession>
<organism>
    <name type="scientific">Halorhodospira halophila (strain DSM 244 / SL1)</name>
    <name type="common">Ectothiorhodospira halophila (strain DSM 244 / SL1)</name>
    <dbReference type="NCBI Taxonomy" id="349124"/>
    <lineage>
        <taxon>Bacteria</taxon>
        <taxon>Pseudomonadati</taxon>
        <taxon>Pseudomonadota</taxon>
        <taxon>Gammaproteobacteria</taxon>
        <taxon>Chromatiales</taxon>
        <taxon>Ectothiorhodospiraceae</taxon>
        <taxon>Halorhodospira</taxon>
    </lineage>
</organism>
<comment type="function">
    <text evidence="1">Together with its co-chaperonin GroES, plays an essential role in assisting protein folding. The GroEL-GroES system forms a nano-cage that allows encapsulation of the non-native substrate proteins and provides a physical environment optimized to promote and accelerate protein folding.</text>
</comment>
<comment type="catalytic activity">
    <reaction evidence="1">
        <text>ATP + H2O + a folded polypeptide = ADP + phosphate + an unfolded polypeptide.</text>
        <dbReference type="EC" id="5.6.1.7"/>
    </reaction>
</comment>
<comment type="subunit">
    <text evidence="1">Forms a cylinder of 14 subunits composed of two heptameric rings stacked back-to-back. Interacts with the co-chaperonin GroES.</text>
</comment>
<comment type="subcellular location">
    <subcellularLocation>
        <location evidence="1">Cytoplasm</location>
    </subcellularLocation>
</comment>
<comment type="similarity">
    <text evidence="1">Belongs to the chaperonin (HSP60) family.</text>
</comment>
<reference key="1">
    <citation type="submission" date="2006-12" db="EMBL/GenBank/DDBJ databases">
        <title>Complete sequence of Halorhodospira halophila SL1.</title>
        <authorList>
            <consortium name="US DOE Joint Genome Institute"/>
            <person name="Copeland A."/>
            <person name="Lucas S."/>
            <person name="Lapidus A."/>
            <person name="Barry K."/>
            <person name="Detter J.C."/>
            <person name="Glavina del Rio T."/>
            <person name="Hammon N."/>
            <person name="Israni S."/>
            <person name="Dalin E."/>
            <person name="Tice H."/>
            <person name="Pitluck S."/>
            <person name="Saunders E."/>
            <person name="Brettin T."/>
            <person name="Bruce D."/>
            <person name="Han C."/>
            <person name="Tapia R."/>
            <person name="Schmutz J."/>
            <person name="Larimer F."/>
            <person name="Land M."/>
            <person name="Hauser L."/>
            <person name="Kyrpides N."/>
            <person name="Mikhailova N."/>
            <person name="Hoff W."/>
            <person name="Richardson P."/>
        </authorList>
    </citation>
    <scope>NUCLEOTIDE SEQUENCE [LARGE SCALE GENOMIC DNA]</scope>
    <source>
        <strain>DSM 244 / SL1</strain>
    </source>
</reference>
<name>CH60_HALHL</name>